<comment type="function">
    <text evidence="1">Cell division protein that is part of the divisome complex and is recruited early to the Z-ring. Probably stimulates Z-ring formation, perhaps through the cross-linking of FtsZ protofilaments. Its function overlaps with FtsA.</text>
</comment>
<comment type="subunit">
    <text evidence="1">Homodimer. Interacts with FtsZ.</text>
</comment>
<comment type="subcellular location">
    <subcellularLocation>
        <location evidence="1">Cytoplasm</location>
    </subcellularLocation>
    <text evidence="1">Localizes to the division site, in a FtsZ-dependent manner.</text>
</comment>
<comment type="similarity">
    <text evidence="1">Belongs to the SepF family.</text>
</comment>
<accession>C1A0W9</accession>
<feature type="chain" id="PRO_1000213814" description="Cell division protein SepF">
    <location>
        <begin position="1"/>
        <end position="216"/>
    </location>
</feature>
<feature type="region of interest" description="Disordered" evidence="2">
    <location>
        <begin position="22"/>
        <end position="126"/>
    </location>
</feature>
<feature type="compositionally biased region" description="Basic and acidic residues" evidence="2">
    <location>
        <begin position="28"/>
        <end position="50"/>
    </location>
</feature>
<feature type="compositionally biased region" description="Basic and acidic residues" evidence="2">
    <location>
        <begin position="62"/>
        <end position="80"/>
    </location>
</feature>
<feature type="compositionally biased region" description="Basic and acidic residues" evidence="2">
    <location>
        <begin position="106"/>
        <end position="118"/>
    </location>
</feature>
<organism>
    <name type="scientific">Rhodococcus erythropolis (strain PR4 / NBRC 100887)</name>
    <dbReference type="NCBI Taxonomy" id="234621"/>
    <lineage>
        <taxon>Bacteria</taxon>
        <taxon>Bacillati</taxon>
        <taxon>Actinomycetota</taxon>
        <taxon>Actinomycetes</taxon>
        <taxon>Mycobacteriales</taxon>
        <taxon>Nocardiaceae</taxon>
        <taxon>Rhodococcus</taxon>
        <taxon>Rhodococcus erythropolis group</taxon>
    </lineage>
</organism>
<proteinExistence type="inferred from homology"/>
<reference key="1">
    <citation type="submission" date="2005-03" db="EMBL/GenBank/DDBJ databases">
        <title>Comparison of the complete genome sequences of Rhodococcus erythropolis PR4 and Rhodococcus opacus B4.</title>
        <authorList>
            <person name="Takarada H."/>
            <person name="Sekine M."/>
            <person name="Hosoyama A."/>
            <person name="Yamada R."/>
            <person name="Fujisawa T."/>
            <person name="Omata S."/>
            <person name="Shimizu A."/>
            <person name="Tsukatani N."/>
            <person name="Tanikawa S."/>
            <person name="Fujita N."/>
            <person name="Harayama S."/>
        </authorList>
    </citation>
    <scope>NUCLEOTIDE SEQUENCE [LARGE SCALE GENOMIC DNA]</scope>
    <source>
        <strain>PR4 / NBRC 100887</strain>
    </source>
</reference>
<dbReference type="EMBL" id="AP008957">
    <property type="protein sequence ID" value="BAH34254.1"/>
    <property type="molecule type" value="Genomic_DNA"/>
</dbReference>
<dbReference type="RefSeq" id="WP_003941752.1">
    <property type="nucleotide sequence ID" value="NC_012490.1"/>
</dbReference>
<dbReference type="SMR" id="C1A0W9"/>
<dbReference type="KEGG" id="rer:RER_35460"/>
<dbReference type="eggNOG" id="COG1799">
    <property type="taxonomic scope" value="Bacteria"/>
</dbReference>
<dbReference type="HOGENOM" id="CLU_078499_0_0_11"/>
<dbReference type="Proteomes" id="UP000002204">
    <property type="component" value="Chromosome"/>
</dbReference>
<dbReference type="GO" id="GO:0005737">
    <property type="term" value="C:cytoplasm"/>
    <property type="evidence" value="ECO:0007669"/>
    <property type="project" value="UniProtKB-SubCell"/>
</dbReference>
<dbReference type="GO" id="GO:0000917">
    <property type="term" value="P:division septum assembly"/>
    <property type="evidence" value="ECO:0007669"/>
    <property type="project" value="UniProtKB-KW"/>
</dbReference>
<dbReference type="GO" id="GO:0043093">
    <property type="term" value="P:FtsZ-dependent cytokinesis"/>
    <property type="evidence" value="ECO:0007669"/>
    <property type="project" value="UniProtKB-UniRule"/>
</dbReference>
<dbReference type="FunFam" id="3.30.110.150:FF:000001">
    <property type="entry name" value="Cell division protein SepF"/>
    <property type="match status" value="1"/>
</dbReference>
<dbReference type="Gene3D" id="3.30.110.150">
    <property type="entry name" value="SepF-like protein"/>
    <property type="match status" value="1"/>
</dbReference>
<dbReference type="HAMAP" id="MF_01197">
    <property type="entry name" value="SepF"/>
    <property type="match status" value="1"/>
</dbReference>
<dbReference type="InterPro" id="IPR023052">
    <property type="entry name" value="Cell_div_SepF"/>
</dbReference>
<dbReference type="InterPro" id="IPR007561">
    <property type="entry name" value="Cell_div_SepF/SepF-rel"/>
</dbReference>
<dbReference type="InterPro" id="IPR038594">
    <property type="entry name" value="SepF-like_sf"/>
</dbReference>
<dbReference type="PANTHER" id="PTHR35798">
    <property type="entry name" value="CELL DIVISION PROTEIN SEPF"/>
    <property type="match status" value="1"/>
</dbReference>
<dbReference type="PANTHER" id="PTHR35798:SF1">
    <property type="entry name" value="CELL DIVISION PROTEIN SEPF"/>
    <property type="match status" value="1"/>
</dbReference>
<dbReference type="Pfam" id="PF04472">
    <property type="entry name" value="SepF"/>
    <property type="match status" value="1"/>
</dbReference>
<evidence type="ECO:0000255" key="1">
    <source>
        <dbReference type="HAMAP-Rule" id="MF_01197"/>
    </source>
</evidence>
<evidence type="ECO:0000256" key="2">
    <source>
        <dbReference type="SAM" id="MobiDB-lite"/>
    </source>
</evidence>
<sequence>MSNLHKFKAYFGMVPLDDYEDEYVEEPDQARRAPRRSHDGYAERDDREFVEPAFSKASYAPSRRDEEDAEFDRYDSRPRVDTVPSRSSRPAMAPRPASRGNLAVDARAERPEARRAPVVDDGGPLAKITTLRPQSYAEARTIGERFRDGTPVIMDLVDMSNADAKRLVDFAAGLAFALRGSFDKVATKVFLLSPADIDVSAEERRRIAETGFYSQK</sequence>
<protein>
    <recommendedName>
        <fullName evidence="1">Cell division protein SepF</fullName>
    </recommendedName>
</protein>
<gene>
    <name evidence="1" type="primary">sepF</name>
    <name type="ordered locus">RER_35460</name>
</gene>
<name>SEPF_RHOE4</name>
<keyword id="KW-0131">Cell cycle</keyword>
<keyword id="KW-0132">Cell division</keyword>
<keyword id="KW-0963">Cytoplasm</keyword>
<keyword id="KW-0717">Septation</keyword>